<keyword id="KW-0496">Mitochondrion</keyword>
<keyword id="KW-1185">Reference proteome</keyword>
<keyword id="KW-0677">Repeat</keyword>
<keyword id="KW-0809">Transit peptide</keyword>
<sequence length="763" mass="85184">MTLLNYLHCNRSKSFLFQRFYSPYRIAHKLFDGSSQRNATTSINHSISESLRRNSPARALSIFKENLQLGYFGRHMDEVTLCLALKACRGDLKRGCQIHGFSTTSGFTSFVCVSNAVMGMYRKAGRFDNALCIFENLVDPDVVSWNTILSGFDDNQIALNFVVRMKSAGVVFDAFTYSTALSFCVGSEGFLLGLQLQSTVVKTGLESDLVVGNSFITMYSRSGSFRGARRVFDEMSFKDMISWNSLLSGLSQEGTFGFEAVVIFRDMMREGVELDHVSFTSVITTCCHETDLKLARQIHGLCIKRGYESLLEVGNILMSRYSKCGVLEAVKSVFHQMSERNVVSWTTMISSNKDDAVSIFLNMRFDGVYPNEVTFVGLINAVKCNEQIKEGLKIHGLCIKTGFVSEPSVGNSFITLYAKFEALEDAKKAFEDITFREIISWNAMISGFAQNGFSHEALKMFLSAAAETMPNEYTFGSVLNAIAFAEDISVKQGQRCHAHLLKLGLNSCPVVSSALLDMYAKRGNIDESEKVFNEMSQKNQFVWTSIISAYSSHGDFETVMNLFHKMIKENVAPDLVTFLSVLTACNRKGMVDKGYEIFNMMIEVYNLEPSHEHYSCMVDMLGRAGRLKEAEELMSEVPGGPGESMLQSMLGSCRLHGNVKMGAKVAELAMEMKPELSGSYVQMYNIYAEKEEWDKAAEIRKAMRKKNVSKEAGFSWIDVGDTEGSLTMQGFSSGDKSHPKSDEIYRMVEIIGLEMNLEGKVAV</sequence>
<evidence type="ECO:0000255" key="1"/>
<evidence type="ECO:0000305" key="2"/>
<comment type="subcellular location">
    <subcellularLocation>
        <location evidence="2">Mitochondrion</location>
    </subcellularLocation>
</comment>
<comment type="similarity">
    <text evidence="2">Belongs to the PPR family. PCMP-E subfamily.</text>
</comment>
<comment type="sequence caution" evidence="2">
    <conflict type="erroneous initiation">
        <sequence resource="EMBL-CDS" id="CAA22570"/>
    </conflict>
</comment>
<comment type="sequence caution" evidence="2">
    <conflict type="erroneous initiation">
        <sequence resource="EMBL-CDS" id="CAB79960"/>
    </conflict>
</comment>
<comment type="online information" name="Pentatricopeptide repeat proteins">
    <link uri="https://ppr.plantenergy.uwa.edu.au"/>
</comment>
<protein>
    <recommendedName>
        <fullName>Pentatricopeptide repeat-containing protein At4g32430, mitochondrial</fullName>
    </recommendedName>
</protein>
<organism>
    <name type="scientific">Arabidopsis thaliana</name>
    <name type="common">Mouse-ear cress</name>
    <dbReference type="NCBI Taxonomy" id="3702"/>
    <lineage>
        <taxon>Eukaryota</taxon>
        <taxon>Viridiplantae</taxon>
        <taxon>Streptophyta</taxon>
        <taxon>Embryophyta</taxon>
        <taxon>Tracheophyta</taxon>
        <taxon>Spermatophyta</taxon>
        <taxon>Magnoliopsida</taxon>
        <taxon>eudicotyledons</taxon>
        <taxon>Gunneridae</taxon>
        <taxon>Pentapetalae</taxon>
        <taxon>rosids</taxon>
        <taxon>malvids</taxon>
        <taxon>Brassicales</taxon>
        <taxon>Brassicaceae</taxon>
        <taxon>Camelineae</taxon>
        <taxon>Arabidopsis</taxon>
    </lineage>
</organism>
<gene>
    <name type="primary">PCMP-E40</name>
    <name type="synonym">PCMP-E97</name>
    <name type="ordered locus">At4g32430</name>
    <name type="ORF">F8B4.130</name>
</gene>
<feature type="transit peptide" description="Mitochondrion" evidence="1">
    <location>
        <begin position="1"/>
        <end position="38"/>
    </location>
</feature>
<feature type="chain" id="PRO_0000363462" description="Pentatricopeptide repeat-containing protein At4g32430, mitochondrial">
    <location>
        <begin position="39"/>
        <end position="763"/>
    </location>
</feature>
<feature type="repeat" description="PPR 1">
    <location>
        <begin position="77"/>
        <end position="109"/>
    </location>
</feature>
<feature type="repeat" description="PPR 2">
    <location>
        <begin position="110"/>
        <end position="140"/>
    </location>
</feature>
<feature type="repeat" description="PPR 3">
    <location>
        <begin position="141"/>
        <end position="172"/>
    </location>
</feature>
<feature type="repeat" description="PPR 4">
    <location>
        <begin position="173"/>
        <end position="207"/>
    </location>
</feature>
<feature type="repeat" description="PPR 5">
    <location>
        <begin position="208"/>
        <end position="238"/>
    </location>
</feature>
<feature type="repeat" description="PPR 6">
    <location>
        <begin position="239"/>
        <end position="274"/>
    </location>
</feature>
<feature type="repeat" description="PPR 7">
    <location>
        <begin position="275"/>
        <end position="309"/>
    </location>
</feature>
<feature type="repeat" description="PPR 8">
    <location>
        <begin position="310"/>
        <end position="344"/>
    </location>
</feature>
<feature type="repeat" description="PPR 9">
    <location>
        <begin position="350"/>
        <end position="370"/>
    </location>
</feature>
<feature type="repeat" description="PPR 10">
    <location>
        <begin position="371"/>
        <end position="405"/>
    </location>
</feature>
<feature type="repeat" description="PPR 11">
    <location>
        <begin position="406"/>
        <end position="436"/>
    </location>
</feature>
<feature type="repeat" description="PPR 12">
    <location>
        <begin position="437"/>
        <end position="471"/>
    </location>
</feature>
<feature type="repeat" description="PPR 13">
    <location>
        <begin position="472"/>
        <end position="507"/>
    </location>
</feature>
<feature type="repeat" description="PPR 14">
    <location>
        <begin position="508"/>
        <end position="538"/>
    </location>
</feature>
<feature type="repeat" description="PPR 15">
    <location>
        <begin position="539"/>
        <end position="573"/>
    </location>
</feature>
<feature type="repeat" description="PPR 16">
    <location>
        <begin position="574"/>
        <end position="604"/>
    </location>
</feature>
<feature type="repeat" description="PPR 17">
    <location>
        <begin position="610"/>
        <end position="640"/>
    </location>
</feature>
<feature type="region of interest" description="Type E motif">
    <location>
        <begin position="645"/>
        <end position="720"/>
    </location>
</feature>
<feature type="region of interest" description="Type E(+) motif">
    <location>
        <begin position="724"/>
        <end position="756"/>
    </location>
</feature>
<accession>Q84MA3</accession>
<accession>Q9SUU9</accession>
<name>PP345_ARATH</name>
<reference key="1">
    <citation type="journal article" date="1999" name="Nature">
        <title>Sequence and analysis of chromosome 4 of the plant Arabidopsis thaliana.</title>
        <authorList>
            <person name="Mayer K.F.X."/>
            <person name="Schueller C."/>
            <person name="Wambutt R."/>
            <person name="Murphy G."/>
            <person name="Volckaert G."/>
            <person name="Pohl T."/>
            <person name="Duesterhoeft A."/>
            <person name="Stiekema W."/>
            <person name="Entian K.-D."/>
            <person name="Terryn N."/>
            <person name="Harris B."/>
            <person name="Ansorge W."/>
            <person name="Brandt P."/>
            <person name="Grivell L.A."/>
            <person name="Rieger M."/>
            <person name="Weichselgartner M."/>
            <person name="de Simone V."/>
            <person name="Obermaier B."/>
            <person name="Mache R."/>
            <person name="Mueller M."/>
            <person name="Kreis M."/>
            <person name="Delseny M."/>
            <person name="Puigdomenech P."/>
            <person name="Watson M."/>
            <person name="Schmidtheini T."/>
            <person name="Reichert B."/>
            <person name="Portetelle D."/>
            <person name="Perez-Alonso M."/>
            <person name="Boutry M."/>
            <person name="Bancroft I."/>
            <person name="Vos P."/>
            <person name="Hoheisel J."/>
            <person name="Zimmermann W."/>
            <person name="Wedler H."/>
            <person name="Ridley P."/>
            <person name="Langham S.-A."/>
            <person name="McCullagh B."/>
            <person name="Bilham L."/>
            <person name="Robben J."/>
            <person name="van der Schueren J."/>
            <person name="Grymonprez B."/>
            <person name="Chuang Y.-J."/>
            <person name="Vandenbussche F."/>
            <person name="Braeken M."/>
            <person name="Weltjens I."/>
            <person name="Voet M."/>
            <person name="Bastiaens I."/>
            <person name="Aert R."/>
            <person name="Defoor E."/>
            <person name="Weitzenegger T."/>
            <person name="Bothe G."/>
            <person name="Ramsperger U."/>
            <person name="Hilbert H."/>
            <person name="Braun M."/>
            <person name="Holzer E."/>
            <person name="Brandt A."/>
            <person name="Peters S."/>
            <person name="van Staveren M."/>
            <person name="Dirkse W."/>
            <person name="Mooijman P."/>
            <person name="Klein Lankhorst R."/>
            <person name="Rose M."/>
            <person name="Hauf J."/>
            <person name="Koetter P."/>
            <person name="Berneiser S."/>
            <person name="Hempel S."/>
            <person name="Feldpausch M."/>
            <person name="Lamberth S."/>
            <person name="Van den Daele H."/>
            <person name="De Keyser A."/>
            <person name="Buysshaert C."/>
            <person name="Gielen J."/>
            <person name="Villarroel R."/>
            <person name="De Clercq R."/>
            <person name="van Montagu M."/>
            <person name="Rogers J."/>
            <person name="Cronin A."/>
            <person name="Quail M.A."/>
            <person name="Bray-Allen S."/>
            <person name="Clark L."/>
            <person name="Doggett J."/>
            <person name="Hall S."/>
            <person name="Kay M."/>
            <person name="Lennard N."/>
            <person name="McLay K."/>
            <person name="Mayes R."/>
            <person name="Pettett A."/>
            <person name="Rajandream M.A."/>
            <person name="Lyne M."/>
            <person name="Benes V."/>
            <person name="Rechmann S."/>
            <person name="Borkova D."/>
            <person name="Bloecker H."/>
            <person name="Scharfe M."/>
            <person name="Grimm M."/>
            <person name="Loehnert T.-H."/>
            <person name="Dose S."/>
            <person name="de Haan M."/>
            <person name="Maarse A.C."/>
            <person name="Schaefer M."/>
            <person name="Mueller-Auer S."/>
            <person name="Gabel C."/>
            <person name="Fuchs M."/>
            <person name="Fartmann B."/>
            <person name="Granderath K."/>
            <person name="Dauner D."/>
            <person name="Herzl A."/>
            <person name="Neumann S."/>
            <person name="Argiriou A."/>
            <person name="Vitale D."/>
            <person name="Liguori R."/>
            <person name="Piravandi E."/>
            <person name="Massenet O."/>
            <person name="Quigley F."/>
            <person name="Clabauld G."/>
            <person name="Muendlein A."/>
            <person name="Felber R."/>
            <person name="Schnabl S."/>
            <person name="Hiller R."/>
            <person name="Schmidt W."/>
            <person name="Lecharny A."/>
            <person name="Aubourg S."/>
            <person name="Chefdor F."/>
            <person name="Cooke R."/>
            <person name="Berger C."/>
            <person name="Monfort A."/>
            <person name="Casacuberta E."/>
            <person name="Gibbons T."/>
            <person name="Weber N."/>
            <person name="Vandenbol M."/>
            <person name="Bargues M."/>
            <person name="Terol J."/>
            <person name="Torres A."/>
            <person name="Perez-Perez A."/>
            <person name="Purnelle B."/>
            <person name="Bent E."/>
            <person name="Johnson S."/>
            <person name="Tacon D."/>
            <person name="Jesse T."/>
            <person name="Heijnen L."/>
            <person name="Schwarz S."/>
            <person name="Scholler P."/>
            <person name="Heber S."/>
            <person name="Francs P."/>
            <person name="Bielke C."/>
            <person name="Frishman D."/>
            <person name="Haase D."/>
            <person name="Lemcke K."/>
            <person name="Mewes H.-W."/>
            <person name="Stocker S."/>
            <person name="Zaccaria P."/>
            <person name="Bevan M."/>
            <person name="Wilson R.K."/>
            <person name="de la Bastide M."/>
            <person name="Habermann K."/>
            <person name="Parnell L."/>
            <person name="Dedhia N."/>
            <person name="Gnoj L."/>
            <person name="Schutz K."/>
            <person name="Huang E."/>
            <person name="Spiegel L."/>
            <person name="Sekhon M."/>
            <person name="Murray J."/>
            <person name="Sheet P."/>
            <person name="Cordes M."/>
            <person name="Abu-Threideh J."/>
            <person name="Stoneking T."/>
            <person name="Kalicki J."/>
            <person name="Graves T."/>
            <person name="Harmon G."/>
            <person name="Edwards J."/>
            <person name="Latreille P."/>
            <person name="Courtney L."/>
            <person name="Cloud J."/>
            <person name="Abbott A."/>
            <person name="Scott K."/>
            <person name="Johnson D."/>
            <person name="Minx P."/>
            <person name="Bentley D."/>
            <person name="Fulton B."/>
            <person name="Miller N."/>
            <person name="Greco T."/>
            <person name="Kemp K."/>
            <person name="Kramer J."/>
            <person name="Fulton L."/>
            <person name="Mardis E."/>
            <person name="Dante M."/>
            <person name="Pepin K."/>
            <person name="Hillier L.W."/>
            <person name="Nelson J."/>
            <person name="Spieth J."/>
            <person name="Ryan E."/>
            <person name="Andrews S."/>
            <person name="Geisel C."/>
            <person name="Layman D."/>
            <person name="Du H."/>
            <person name="Ali J."/>
            <person name="Berghoff A."/>
            <person name="Jones K."/>
            <person name="Drone K."/>
            <person name="Cotton M."/>
            <person name="Joshu C."/>
            <person name="Antonoiu B."/>
            <person name="Zidanic M."/>
            <person name="Strong C."/>
            <person name="Sun H."/>
            <person name="Lamar B."/>
            <person name="Yordan C."/>
            <person name="Ma P."/>
            <person name="Zhong J."/>
            <person name="Preston R."/>
            <person name="Vil D."/>
            <person name="Shekher M."/>
            <person name="Matero A."/>
            <person name="Shah R."/>
            <person name="Swaby I.K."/>
            <person name="O'Shaughnessy A."/>
            <person name="Rodriguez M."/>
            <person name="Hoffman J."/>
            <person name="Till S."/>
            <person name="Granat S."/>
            <person name="Shohdy N."/>
            <person name="Hasegawa A."/>
            <person name="Hameed A."/>
            <person name="Lodhi M."/>
            <person name="Johnson A."/>
            <person name="Chen E."/>
            <person name="Marra M.A."/>
            <person name="Martienssen R."/>
            <person name="McCombie W.R."/>
        </authorList>
    </citation>
    <scope>NUCLEOTIDE SEQUENCE [LARGE SCALE GENOMIC DNA]</scope>
    <source>
        <strain>cv. Columbia</strain>
    </source>
</reference>
<reference key="2">
    <citation type="journal article" date="2017" name="Plant J.">
        <title>Araport11: a complete reannotation of the Arabidopsis thaliana reference genome.</title>
        <authorList>
            <person name="Cheng C.Y."/>
            <person name="Krishnakumar V."/>
            <person name="Chan A.P."/>
            <person name="Thibaud-Nissen F."/>
            <person name="Schobel S."/>
            <person name="Town C.D."/>
        </authorList>
    </citation>
    <scope>GENOME REANNOTATION</scope>
    <source>
        <strain>cv. Columbia</strain>
    </source>
</reference>
<reference key="3">
    <citation type="journal article" date="2003" name="Science">
        <title>Empirical analysis of transcriptional activity in the Arabidopsis genome.</title>
        <authorList>
            <person name="Yamada K."/>
            <person name="Lim J."/>
            <person name="Dale J.M."/>
            <person name="Chen H."/>
            <person name="Shinn P."/>
            <person name="Palm C.J."/>
            <person name="Southwick A.M."/>
            <person name="Wu H.C."/>
            <person name="Kim C.J."/>
            <person name="Nguyen M."/>
            <person name="Pham P.K."/>
            <person name="Cheuk R.F."/>
            <person name="Karlin-Newmann G."/>
            <person name="Liu S.X."/>
            <person name="Lam B."/>
            <person name="Sakano H."/>
            <person name="Wu T."/>
            <person name="Yu G."/>
            <person name="Miranda M."/>
            <person name="Quach H.L."/>
            <person name="Tripp M."/>
            <person name="Chang C.H."/>
            <person name="Lee J.M."/>
            <person name="Toriumi M.J."/>
            <person name="Chan M.M."/>
            <person name="Tang C.C."/>
            <person name="Onodera C.S."/>
            <person name="Deng J.M."/>
            <person name="Akiyama K."/>
            <person name="Ansari Y."/>
            <person name="Arakawa T."/>
            <person name="Banh J."/>
            <person name="Banno F."/>
            <person name="Bowser L."/>
            <person name="Brooks S.Y."/>
            <person name="Carninci P."/>
            <person name="Chao Q."/>
            <person name="Choy N."/>
            <person name="Enju A."/>
            <person name="Goldsmith A.D."/>
            <person name="Gurjal M."/>
            <person name="Hansen N.F."/>
            <person name="Hayashizaki Y."/>
            <person name="Johnson-Hopson C."/>
            <person name="Hsuan V.W."/>
            <person name="Iida K."/>
            <person name="Karnes M."/>
            <person name="Khan S."/>
            <person name="Koesema E."/>
            <person name="Ishida J."/>
            <person name="Jiang P.X."/>
            <person name="Jones T."/>
            <person name="Kawai J."/>
            <person name="Kamiya A."/>
            <person name="Meyers C."/>
            <person name="Nakajima M."/>
            <person name="Narusaka M."/>
            <person name="Seki M."/>
            <person name="Sakurai T."/>
            <person name="Satou M."/>
            <person name="Tamse R."/>
            <person name="Vaysberg M."/>
            <person name="Wallender E.K."/>
            <person name="Wong C."/>
            <person name="Yamamura Y."/>
            <person name="Yuan S."/>
            <person name="Shinozaki K."/>
            <person name="Davis R.W."/>
            <person name="Theologis A."/>
            <person name="Ecker J.R."/>
        </authorList>
    </citation>
    <scope>NUCLEOTIDE SEQUENCE [LARGE SCALE MRNA]</scope>
    <source>
        <strain>cv. Columbia</strain>
    </source>
</reference>
<reference key="4">
    <citation type="submission" date="2006-07" db="EMBL/GenBank/DDBJ databases">
        <title>Large-scale analysis of RIKEN Arabidopsis full-length (RAFL) cDNAs.</title>
        <authorList>
            <person name="Totoki Y."/>
            <person name="Seki M."/>
            <person name="Ishida J."/>
            <person name="Nakajima M."/>
            <person name="Enju A."/>
            <person name="Kamiya A."/>
            <person name="Narusaka M."/>
            <person name="Shin-i T."/>
            <person name="Nakagawa M."/>
            <person name="Sakamoto N."/>
            <person name="Oishi K."/>
            <person name="Kohara Y."/>
            <person name="Kobayashi M."/>
            <person name="Toyoda A."/>
            <person name="Sakaki Y."/>
            <person name="Sakurai T."/>
            <person name="Iida K."/>
            <person name="Akiyama K."/>
            <person name="Satou M."/>
            <person name="Toyoda T."/>
            <person name="Konagaya A."/>
            <person name="Carninci P."/>
            <person name="Kawai J."/>
            <person name="Hayashizaki Y."/>
            <person name="Shinozaki K."/>
        </authorList>
    </citation>
    <scope>NUCLEOTIDE SEQUENCE [LARGE SCALE MRNA]</scope>
    <source>
        <strain>cv. Columbia</strain>
    </source>
</reference>
<reference key="5">
    <citation type="journal article" date="2000" name="Plant Mol. Biol.">
        <title>In Arabidopsis thaliana, 1% of the genome codes for a novel protein family unique to plants.</title>
        <authorList>
            <person name="Aubourg S."/>
            <person name="Boudet N."/>
            <person name="Kreis M."/>
            <person name="Lecharny A."/>
        </authorList>
    </citation>
    <scope>GENE FAMILY</scope>
</reference>
<reference key="6">
    <citation type="journal article" date="2004" name="Plant Cell">
        <title>Genome-wide analysis of Arabidopsis pentatricopeptide repeat proteins reveals their essential role in organelle biogenesis.</title>
        <authorList>
            <person name="Lurin C."/>
            <person name="Andres C."/>
            <person name="Aubourg S."/>
            <person name="Bellaoui M."/>
            <person name="Bitton F."/>
            <person name="Bruyere C."/>
            <person name="Caboche M."/>
            <person name="Debast C."/>
            <person name="Gualberto J."/>
            <person name="Hoffmann B."/>
            <person name="Lecharny A."/>
            <person name="Le Ret M."/>
            <person name="Martin-Magniette M.-L."/>
            <person name="Mireau H."/>
            <person name="Peeters N."/>
            <person name="Renou J.-P."/>
            <person name="Szurek B."/>
            <person name="Taconnat L."/>
            <person name="Small I."/>
        </authorList>
    </citation>
    <scope>GENE FAMILY</scope>
</reference>
<proteinExistence type="evidence at transcript level"/>
<dbReference type="EMBL" id="AL034567">
    <property type="protein sequence ID" value="CAA22570.1"/>
    <property type="status" value="ALT_INIT"/>
    <property type="molecule type" value="Genomic_DNA"/>
</dbReference>
<dbReference type="EMBL" id="AL161581">
    <property type="protein sequence ID" value="CAB79960.1"/>
    <property type="status" value="ALT_INIT"/>
    <property type="molecule type" value="Genomic_DNA"/>
</dbReference>
<dbReference type="EMBL" id="CP002687">
    <property type="protein sequence ID" value="AEE86058.1"/>
    <property type="molecule type" value="Genomic_DNA"/>
</dbReference>
<dbReference type="EMBL" id="BT006447">
    <property type="protein sequence ID" value="AAP21255.1"/>
    <property type="molecule type" value="mRNA"/>
</dbReference>
<dbReference type="EMBL" id="AK227348">
    <property type="protein sequence ID" value="BAE99358.1"/>
    <property type="molecule type" value="mRNA"/>
</dbReference>
<dbReference type="PIR" id="T05353">
    <property type="entry name" value="T05353"/>
</dbReference>
<dbReference type="RefSeq" id="NP_194969.2">
    <property type="nucleotide sequence ID" value="NM_119395.3"/>
</dbReference>
<dbReference type="SMR" id="Q84MA3"/>
<dbReference type="FunCoup" id="Q84MA3">
    <property type="interactions" value="568"/>
</dbReference>
<dbReference type="STRING" id="3702.Q84MA3"/>
<dbReference type="PaxDb" id="3702-AT4G32430.1"/>
<dbReference type="ProteomicsDB" id="249242"/>
<dbReference type="EnsemblPlants" id="AT4G32430.1">
    <property type="protein sequence ID" value="AT4G32430.1"/>
    <property type="gene ID" value="AT4G32430"/>
</dbReference>
<dbReference type="GeneID" id="829378"/>
<dbReference type="Gramene" id="AT4G32430.1">
    <property type="protein sequence ID" value="AT4G32430.1"/>
    <property type="gene ID" value="AT4G32430"/>
</dbReference>
<dbReference type="KEGG" id="ath:AT4G32430"/>
<dbReference type="Araport" id="AT4G32430"/>
<dbReference type="TAIR" id="AT4G32430">
    <property type="gene designation" value="GRS1"/>
</dbReference>
<dbReference type="eggNOG" id="KOG4197">
    <property type="taxonomic scope" value="Eukaryota"/>
</dbReference>
<dbReference type="HOGENOM" id="CLU_002706_15_6_1"/>
<dbReference type="InParanoid" id="Q84MA3"/>
<dbReference type="PhylomeDB" id="Q84MA3"/>
<dbReference type="PRO" id="PR:Q84MA3"/>
<dbReference type="Proteomes" id="UP000006548">
    <property type="component" value="Chromosome 4"/>
</dbReference>
<dbReference type="ExpressionAtlas" id="Q84MA3">
    <property type="expression patterns" value="baseline and differential"/>
</dbReference>
<dbReference type="GO" id="GO:0005739">
    <property type="term" value="C:mitochondrion"/>
    <property type="evidence" value="ECO:0000314"/>
    <property type="project" value="TAIR"/>
</dbReference>
<dbReference type="GO" id="GO:0003723">
    <property type="term" value="F:RNA binding"/>
    <property type="evidence" value="ECO:0007669"/>
    <property type="project" value="InterPro"/>
</dbReference>
<dbReference type="GO" id="GO:1905639">
    <property type="term" value="P:positive regulation of mitochondrial mRNA catabolic process"/>
    <property type="evidence" value="ECO:0000315"/>
    <property type="project" value="TAIR"/>
</dbReference>
<dbReference type="GO" id="GO:0009451">
    <property type="term" value="P:RNA modification"/>
    <property type="evidence" value="ECO:0007669"/>
    <property type="project" value="InterPro"/>
</dbReference>
<dbReference type="FunFam" id="1.25.40.10:FF:000453">
    <property type="entry name" value="Pentatricopeptide repeat-containing protein mitochondrial"/>
    <property type="match status" value="1"/>
</dbReference>
<dbReference type="FunFam" id="1.25.40.10:FF:000573">
    <property type="entry name" value="Pentatricopeptide repeat-containing protein mitochondrial"/>
    <property type="match status" value="1"/>
</dbReference>
<dbReference type="FunFam" id="1.25.40.10:FF:000205">
    <property type="entry name" value="Pentatricopeptide repeat-containing protein, mitochondrial"/>
    <property type="match status" value="1"/>
</dbReference>
<dbReference type="FunFam" id="1.25.40.10:FF:001392">
    <property type="entry name" value="Pentatricopeptide repeat-containing protein, mitochondrial isoform A"/>
    <property type="match status" value="1"/>
</dbReference>
<dbReference type="Gene3D" id="1.25.40.10">
    <property type="entry name" value="Tetratricopeptide repeat domain"/>
    <property type="match status" value="4"/>
</dbReference>
<dbReference type="InterPro" id="IPR046848">
    <property type="entry name" value="E_motif"/>
</dbReference>
<dbReference type="InterPro" id="IPR002885">
    <property type="entry name" value="Pentatricopeptide_rpt"/>
</dbReference>
<dbReference type="InterPro" id="IPR046960">
    <property type="entry name" value="PPR_At4g14850-like_plant"/>
</dbReference>
<dbReference type="InterPro" id="IPR011990">
    <property type="entry name" value="TPR-like_helical_dom_sf"/>
</dbReference>
<dbReference type="NCBIfam" id="TIGR00756">
    <property type="entry name" value="PPR"/>
    <property type="match status" value="6"/>
</dbReference>
<dbReference type="PANTHER" id="PTHR47926:SF524">
    <property type="entry name" value="(WILD MALAYSIAN BANANA) HYPOTHETICAL PROTEIN"/>
    <property type="match status" value="1"/>
</dbReference>
<dbReference type="PANTHER" id="PTHR47926">
    <property type="entry name" value="PENTATRICOPEPTIDE REPEAT-CONTAINING PROTEIN"/>
    <property type="match status" value="1"/>
</dbReference>
<dbReference type="Pfam" id="PF20431">
    <property type="entry name" value="E_motif"/>
    <property type="match status" value="1"/>
</dbReference>
<dbReference type="Pfam" id="PF01535">
    <property type="entry name" value="PPR"/>
    <property type="match status" value="5"/>
</dbReference>
<dbReference type="Pfam" id="PF13041">
    <property type="entry name" value="PPR_2"/>
    <property type="match status" value="2"/>
</dbReference>
<dbReference type="PROSITE" id="PS51375">
    <property type="entry name" value="PPR"/>
    <property type="match status" value="13"/>
</dbReference>